<accession>P18526</accession>
<organism>
    <name type="scientific">Mus musculus</name>
    <name type="common">Mouse</name>
    <dbReference type="NCBI Taxonomy" id="10090"/>
    <lineage>
        <taxon>Eukaryota</taxon>
        <taxon>Metazoa</taxon>
        <taxon>Chordata</taxon>
        <taxon>Craniata</taxon>
        <taxon>Vertebrata</taxon>
        <taxon>Euteleostomi</taxon>
        <taxon>Mammalia</taxon>
        <taxon>Eutheria</taxon>
        <taxon>Euarchontoglires</taxon>
        <taxon>Glires</taxon>
        <taxon>Rodentia</taxon>
        <taxon>Myomorpha</taxon>
        <taxon>Muroidea</taxon>
        <taxon>Muridae</taxon>
        <taxon>Murinae</taxon>
        <taxon>Mus</taxon>
        <taxon>Mus</taxon>
    </lineage>
</organism>
<protein>
    <recommendedName>
        <fullName>Ig heavy chain V region 345</fullName>
    </recommendedName>
</protein>
<proteinExistence type="evidence at protein level"/>
<reference key="1">
    <citation type="journal article" date="1989" name="J. Exp. Med.">
        <title>Early onset of somatic mutation in immunoglobulin VH genes during the primary immune response.</title>
        <authorList>
            <person name="Levy N.S."/>
            <person name="Malipiero U.V."/>
            <person name="Lebecque S.G."/>
            <person name="Gearhart P.J."/>
        </authorList>
    </citation>
    <scope>NUCLEOTIDE SEQUENCE</scope>
    <source>
        <strain>BALB/cJ</strain>
    </source>
</reference>
<comment type="miscellaneous">
    <text>This sequence belongs to the VH7183 subfamily.</text>
</comment>
<sequence length="117" mass="12902">MNFGLRLIFLVLTLKGVKCEVQLVESGGGLVKPGGSLKLSCAASGFAFSSYDMSWVRQTPEKRLEWVAYISSGGGSTYYPDTVKGRFTISRDNAKNTLYLQMSSLKSEDTAMYYCAR</sequence>
<keyword id="KW-0002">3D-structure</keyword>
<keyword id="KW-1064">Adaptive immunity</keyword>
<keyword id="KW-1015">Disulfide bond</keyword>
<keyword id="KW-0391">Immunity</keyword>
<keyword id="KW-1280">Immunoglobulin</keyword>
<keyword id="KW-1185">Reference proteome</keyword>
<keyword id="KW-0732">Signal</keyword>
<name>HVM55_MOUSE</name>
<feature type="signal peptide">
    <location>
        <begin position="1"/>
        <end position="19"/>
    </location>
</feature>
<feature type="chain" id="PRO_0000015238" description="Ig heavy chain V region 345">
    <location>
        <begin position="20"/>
        <end position="117"/>
    </location>
</feature>
<feature type="region of interest" description="Framework-1">
    <location>
        <begin position="20"/>
        <end position="49"/>
    </location>
</feature>
<feature type="region of interest" description="Complementarity-determining-1">
    <location>
        <begin position="50"/>
        <end position="54"/>
    </location>
</feature>
<feature type="region of interest" description="Framework-2">
    <location>
        <begin position="55"/>
        <end position="68"/>
    </location>
</feature>
<feature type="region of interest" description="Complementarity-determining-2">
    <location>
        <begin position="69"/>
        <end position="85"/>
    </location>
</feature>
<feature type="region of interest" description="Framework-3">
    <location>
        <begin position="86"/>
        <end position="117"/>
    </location>
</feature>
<feature type="disulfide bond" evidence="1">
    <location>
        <begin position="41"/>
        <end position="115"/>
    </location>
</feature>
<feature type="non-terminal residue">
    <location>
        <position position="117"/>
    </location>
</feature>
<feature type="strand" evidence="2">
    <location>
        <begin position="23"/>
        <end position="26"/>
    </location>
</feature>
<feature type="strand" evidence="2">
    <location>
        <begin position="37"/>
        <end position="43"/>
    </location>
</feature>
<feature type="helix" evidence="2">
    <location>
        <begin position="48"/>
        <end position="50"/>
    </location>
</feature>
<feature type="strand" evidence="2">
    <location>
        <begin position="53"/>
        <end position="58"/>
    </location>
</feature>
<feature type="strand" evidence="2">
    <location>
        <begin position="64"/>
        <end position="66"/>
    </location>
</feature>
<feature type="turn" evidence="2">
    <location>
        <begin position="81"/>
        <end position="86"/>
    </location>
</feature>
<feature type="strand" evidence="2">
    <location>
        <begin position="87"/>
        <end position="89"/>
    </location>
</feature>
<feature type="turn" evidence="2">
    <location>
        <begin position="93"/>
        <end position="96"/>
    </location>
</feature>
<feature type="strand" evidence="2">
    <location>
        <begin position="97"/>
        <end position="102"/>
    </location>
</feature>
<feature type="helix" evidence="2">
    <location>
        <begin position="107"/>
        <end position="109"/>
    </location>
</feature>
<feature type="strand" evidence="2">
    <location>
        <begin position="111"/>
        <end position="117"/>
    </location>
</feature>
<dbReference type="PIR" id="JT0502">
    <property type="entry name" value="HVMS34"/>
</dbReference>
<dbReference type="PDB" id="1QFW">
    <property type="method" value="X-ray"/>
    <property type="resolution" value="3.50 A"/>
    <property type="chains" value="I=21-117"/>
</dbReference>
<dbReference type="PDBsum" id="1QFW"/>
<dbReference type="SMR" id="P18526"/>
<dbReference type="FunCoup" id="P18526">
    <property type="interactions" value="641"/>
</dbReference>
<dbReference type="jPOST" id="P18526"/>
<dbReference type="PeptideAtlas" id="P18526"/>
<dbReference type="InParanoid" id="P18526"/>
<dbReference type="EvolutionaryTrace" id="P18526"/>
<dbReference type="Proteomes" id="UP000000589">
    <property type="component" value="Unplaced"/>
</dbReference>
<dbReference type="RNAct" id="P18526">
    <property type="molecule type" value="protein"/>
</dbReference>
<dbReference type="GO" id="GO:0005576">
    <property type="term" value="C:extracellular region"/>
    <property type="evidence" value="ECO:0007669"/>
    <property type="project" value="UniProtKB-ARBA"/>
</dbReference>
<dbReference type="GO" id="GO:0019814">
    <property type="term" value="C:immunoglobulin complex"/>
    <property type="evidence" value="ECO:0007669"/>
    <property type="project" value="UniProtKB-KW"/>
</dbReference>
<dbReference type="GO" id="GO:0003823">
    <property type="term" value="F:antigen binding"/>
    <property type="evidence" value="ECO:0000318"/>
    <property type="project" value="GO_Central"/>
</dbReference>
<dbReference type="GO" id="GO:0016064">
    <property type="term" value="P:immunoglobulin mediated immune response"/>
    <property type="evidence" value="ECO:0000318"/>
    <property type="project" value="GO_Central"/>
</dbReference>
<dbReference type="CDD" id="cd04981">
    <property type="entry name" value="IgV_H"/>
    <property type="match status" value="1"/>
</dbReference>
<dbReference type="FunFam" id="2.60.40.10:FF:001423">
    <property type="entry name" value="Ig heavy chain V region 5-84"/>
    <property type="match status" value="1"/>
</dbReference>
<dbReference type="Gene3D" id="2.60.40.10">
    <property type="entry name" value="Immunoglobulins"/>
    <property type="match status" value="1"/>
</dbReference>
<dbReference type="InterPro" id="IPR007110">
    <property type="entry name" value="Ig-like_dom"/>
</dbReference>
<dbReference type="InterPro" id="IPR036179">
    <property type="entry name" value="Ig-like_dom_sf"/>
</dbReference>
<dbReference type="InterPro" id="IPR013783">
    <property type="entry name" value="Ig-like_fold"/>
</dbReference>
<dbReference type="InterPro" id="IPR013106">
    <property type="entry name" value="Ig_V-set"/>
</dbReference>
<dbReference type="InterPro" id="IPR050199">
    <property type="entry name" value="IgHV"/>
</dbReference>
<dbReference type="PANTHER" id="PTHR23266">
    <property type="entry name" value="IMMUNOGLOBULIN HEAVY CHAIN"/>
    <property type="match status" value="1"/>
</dbReference>
<dbReference type="Pfam" id="PF07686">
    <property type="entry name" value="V-set"/>
    <property type="match status" value="1"/>
</dbReference>
<dbReference type="SMART" id="SM00406">
    <property type="entry name" value="IGv"/>
    <property type="match status" value="1"/>
</dbReference>
<dbReference type="SUPFAM" id="SSF48726">
    <property type="entry name" value="Immunoglobulin"/>
    <property type="match status" value="1"/>
</dbReference>
<dbReference type="PROSITE" id="PS50835">
    <property type="entry name" value="IG_LIKE"/>
    <property type="match status" value="1"/>
</dbReference>
<evidence type="ECO:0000255" key="1">
    <source>
        <dbReference type="PROSITE-ProRule" id="PRU00114"/>
    </source>
</evidence>
<evidence type="ECO:0007829" key="2">
    <source>
        <dbReference type="PDB" id="1QFW"/>
    </source>
</evidence>